<organism>
    <name type="scientific">Treponema pallidum (strain Nichols)</name>
    <dbReference type="NCBI Taxonomy" id="243276"/>
    <lineage>
        <taxon>Bacteria</taxon>
        <taxon>Pseudomonadati</taxon>
        <taxon>Spirochaetota</taxon>
        <taxon>Spirochaetia</taxon>
        <taxon>Spirochaetales</taxon>
        <taxon>Treponemataceae</taxon>
        <taxon>Treponema</taxon>
    </lineage>
</organism>
<keyword id="KW-1003">Cell membrane</keyword>
<keyword id="KW-0449">Lipoprotein</keyword>
<keyword id="KW-0472">Membrane</keyword>
<keyword id="KW-0564">Palmitate</keyword>
<keyword id="KW-1185">Reference proteome</keyword>
<keyword id="KW-0732">Signal</keyword>
<name>Y462_TREPA</name>
<feature type="signal peptide" evidence="1">
    <location>
        <begin position="1"/>
        <end position="19"/>
    </location>
</feature>
<feature type="chain" id="PRO_0000018068" description="Uncharacterized lipoprotein TP_0462/TP_0463">
    <location>
        <begin position="20"/>
        <end position="392"/>
    </location>
</feature>
<feature type="region of interest" description="Disordered" evidence="2">
    <location>
        <begin position="148"/>
        <end position="173"/>
    </location>
</feature>
<feature type="compositionally biased region" description="Gly residues" evidence="2">
    <location>
        <begin position="151"/>
        <end position="160"/>
    </location>
</feature>
<feature type="lipid moiety-binding region" description="N-palmitoyl cysteine" evidence="1">
    <location>
        <position position="20"/>
    </location>
</feature>
<feature type="lipid moiety-binding region" description="S-diacylglycerol cysteine" evidence="1">
    <location>
        <position position="20"/>
    </location>
</feature>
<comment type="subcellular location">
    <subcellularLocation>
        <location evidence="1">Cell membrane</location>
        <topology evidence="1">Lipid-anchor</topology>
    </subcellularLocation>
</comment>
<comment type="similarity">
    <text evidence="3">Belongs to the TP013X lipoprotein family.</text>
</comment>
<comment type="sequence caution" evidence="3">
    <conflict type="frameshift">
        <sequence resource="EMBL-CDS" id="AAC65456"/>
    </conflict>
    <text>Produces two separate ORFs.</text>
</comment>
<gene>
    <name type="ordered locus">TP_0462/TP_0463</name>
</gene>
<sequence>MRRIVCPPVLFLSASLLTGCDFSGIFASIQSEVPLKIPSIRGVVTGLVKCNNKLYACAGQLWEKDASKSEGKWTAVNFLPGKKITSIVSKGACVYACVSGEGVYTYTSNGAGRTGGTTTPSTVLGKTNGAIRIGGSDNPFLQMPCELSSGSSGGGGGGSGSSSDGGIKNGSDENVLGSGTGYVVTTKAVYTKSNSSGTSCTYTKDGTFTATTSPILGCTSDGKGCFYVLDGTDVHCRTVQASGGGNGAHCAVASGSATSCKVAHTVTNPLCIAHVKNGQTEFLLIGGSQGYKEIKLETGSGSGTGCLKAENVRGPEQWGEDSVTPKDRVSQYEGTIGRFAISDIYTVESTSGAGGTNGGTNKPDVYVVVGDSQDGYTGLWRFDAQKKEWNRE</sequence>
<accession>O83475</accession>
<accession>O83476</accession>
<proteinExistence type="inferred from homology"/>
<evidence type="ECO:0000255" key="1">
    <source>
        <dbReference type="PROSITE-ProRule" id="PRU00303"/>
    </source>
</evidence>
<evidence type="ECO:0000256" key="2">
    <source>
        <dbReference type="SAM" id="MobiDB-lite"/>
    </source>
</evidence>
<evidence type="ECO:0000305" key="3"/>
<protein>
    <recommendedName>
        <fullName>Uncharacterized lipoprotein TP_0462/TP_0463</fullName>
    </recommendedName>
</protein>
<dbReference type="EMBL" id="AE000520">
    <property type="protein sequence ID" value="AAC65455.1"/>
    <property type="status" value="ALT_FRAME"/>
    <property type="molecule type" value="Genomic_DNA"/>
</dbReference>
<dbReference type="EMBL" id="AE000520">
    <property type="protein sequence ID" value="AAC65456.1"/>
    <property type="status" value="ALT_FRAME"/>
    <property type="molecule type" value="Genomic_DNA"/>
</dbReference>
<dbReference type="PIR" id="A71321">
    <property type="entry name" value="A71321"/>
</dbReference>
<dbReference type="PIR" id="H71320">
    <property type="entry name" value="H71320"/>
</dbReference>
<dbReference type="IntAct" id="O83475">
    <property type="interactions" value="22"/>
</dbReference>
<dbReference type="STRING" id="243276.TP_0462"/>
<dbReference type="EnsemblBacteria" id="AAC65455">
    <property type="protein sequence ID" value="AAC65455"/>
    <property type="gene ID" value="TP_0462"/>
</dbReference>
<dbReference type="EnsemblBacteria" id="AAC65456">
    <property type="protein sequence ID" value="AAC65456"/>
    <property type="gene ID" value="TP_0463"/>
</dbReference>
<dbReference type="KEGG" id="tpa:TP_0462"/>
<dbReference type="KEGG" id="tpa:TP_0463"/>
<dbReference type="HOGENOM" id="CLU_056007_0_0_12"/>
<dbReference type="Proteomes" id="UP000000811">
    <property type="component" value="Chromosome"/>
</dbReference>
<dbReference type="GO" id="GO:0005886">
    <property type="term" value="C:plasma membrane"/>
    <property type="evidence" value="ECO:0007669"/>
    <property type="project" value="UniProtKB-SubCell"/>
</dbReference>
<dbReference type="PROSITE" id="PS51257">
    <property type="entry name" value="PROKAR_LIPOPROTEIN"/>
    <property type="match status" value="1"/>
</dbReference>
<reference key="1">
    <citation type="journal article" date="1998" name="Science">
        <title>Complete genome sequence of Treponema pallidum, the syphilis spirochete.</title>
        <authorList>
            <person name="Fraser C.M."/>
            <person name="Norris S.J."/>
            <person name="Weinstock G.M."/>
            <person name="White O."/>
            <person name="Sutton G.G."/>
            <person name="Dodson R.J."/>
            <person name="Gwinn M.L."/>
            <person name="Hickey E.K."/>
            <person name="Clayton R.A."/>
            <person name="Ketchum K.A."/>
            <person name="Sodergren E."/>
            <person name="Hardham J.M."/>
            <person name="McLeod M.P."/>
            <person name="Salzberg S.L."/>
            <person name="Peterson J.D."/>
            <person name="Khalak H.G."/>
            <person name="Richardson D.L."/>
            <person name="Howell J.K."/>
            <person name="Chidambaram M."/>
            <person name="Utterback T.R."/>
            <person name="McDonald L.A."/>
            <person name="Artiach P."/>
            <person name="Bowman C."/>
            <person name="Cotton M.D."/>
            <person name="Fujii C."/>
            <person name="Garland S.A."/>
            <person name="Hatch B."/>
            <person name="Horst K."/>
            <person name="Roberts K.M."/>
            <person name="Sandusky M."/>
            <person name="Weidman J.F."/>
            <person name="Smith H.O."/>
            <person name="Venter J.C."/>
        </authorList>
    </citation>
    <scope>NUCLEOTIDE SEQUENCE [LARGE SCALE GENOMIC DNA]</scope>
    <source>
        <strain>Nichols</strain>
    </source>
</reference>